<comment type="function">
    <text evidence="1">Binds 23S rRNA and is also seen to make contacts with the A and possibly P site tRNAs.</text>
</comment>
<comment type="subunit">
    <text evidence="1">Part of the 50S ribosomal subunit.</text>
</comment>
<comment type="similarity">
    <text evidence="1">Belongs to the universal ribosomal protein uL16 family.</text>
</comment>
<sequence length="139" mass="15842">MLIPRRVKHRKQHHPKRSGMSKGGTQVAFGEYGIQALTPAYVTNRQIESARIAMTRHIKRGGKVWINIYPDRPLTKKPAETRMGSGKGSPEWWIANVKPGRVMFELSYPNEKIAREALTRAAHKLPMKCRIVRREAGES</sequence>
<feature type="chain" id="PRO_1000143032" description="Large ribosomal subunit protein uL16">
    <location>
        <begin position="1"/>
        <end position="139"/>
    </location>
</feature>
<feature type="region of interest" description="Disordered" evidence="2">
    <location>
        <begin position="1"/>
        <end position="25"/>
    </location>
</feature>
<feature type="compositionally biased region" description="Basic residues" evidence="2">
    <location>
        <begin position="1"/>
        <end position="19"/>
    </location>
</feature>
<name>RL16_STRGG</name>
<dbReference type="EMBL" id="AP009493">
    <property type="protein sequence ID" value="BAG19656.1"/>
    <property type="molecule type" value="Genomic_DNA"/>
</dbReference>
<dbReference type="RefSeq" id="WP_003966953.1">
    <property type="nucleotide sequence ID" value="NC_010572.1"/>
</dbReference>
<dbReference type="SMR" id="B1W400"/>
<dbReference type="GeneID" id="97760377"/>
<dbReference type="KEGG" id="sgr:SGR_2827"/>
<dbReference type="eggNOG" id="COG0197">
    <property type="taxonomic scope" value="Bacteria"/>
</dbReference>
<dbReference type="HOGENOM" id="CLU_078858_2_1_11"/>
<dbReference type="Proteomes" id="UP000001685">
    <property type="component" value="Chromosome"/>
</dbReference>
<dbReference type="GO" id="GO:0022625">
    <property type="term" value="C:cytosolic large ribosomal subunit"/>
    <property type="evidence" value="ECO:0007669"/>
    <property type="project" value="TreeGrafter"/>
</dbReference>
<dbReference type="GO" id="GO:0019843">
    <property type="term" value="F:rRNA binding"/>
    <property type="evidence" value="ECO:0007669"/>
    <property type="project" value="UniProtKB-UniRule"/>
</dbReference>
<dbReference type="GO" id="GO:0003735">
    <property type="term" value="F:structural constituent of ribosome"/>
    <property type="evidence" value="ECO:0007669"/>
    <property type="project" value="InterPro"/>
</dbReference>
<dbReference type="GO" id="GO:0000049">
    <property type="term" value="F:tRNA binding"/>
    <property type="evidence" value="ECO:0007669"/>
    <property type="project" value="UniProtKB-KW"/>
</dbReference>
<dbReference type="GO" id="GO:0006412">
    <property type="term" value="P:translation"/>
    <property type="evidence" value="ECO:0007669"/>
    <property type="project" value="UniProtKB-UniRule"/>
</dbReference>
<dbReference type="CDD" id="cd01433">
    <property type="entry name" value="Ribosomal_L16_L10e"/>
    <property type="match status" value="1"/>
</dbReference>
<dbReference type="FunFam" id="3.90.1170.10:FF:000001">
    <property type="entry name" value="50S ribosomal protein L16"/>
    <property type="match status" value="1"/>
</dbReference>
<dbReference type="Gene3D" id="3.90.1170.10">
    <property type="entry name" value="Ribosomal protein L10e/L16"/>
    <property type="match status" value="1"/>
</dbReference>
<dbReference type="HAMAP" id="MF_01342">
    <property type="entry name" value="Ribosomal_uL16"/>
    <property type="match status" value="1"/>
</dbReference>
<dbReference type="InterPro" id="IPR047873">
    <property type="entry name" value="Ribosomal_uL16"/>
</dbReference>
<dbReference type="InterPro" id="IPR000114">
    <property type="entry name" value="Ribosomal_uL16_bact-type"/>
</dbReference>
<dbReference type="InterPro" id="IPR020798">
    <property type="entry name" value="Ribosomal_uL16_CS"/>
</dbReference>
<dbReference type="InterPro" id="IPR016180">
    <property type="entry name" value="Ribosomal_uL16_dom"/>
</dbReference>
<dbReference type="InterPro" id="IPR036920">
    <property type="entry name" value="Ribosomal_uL16_sf"/>
</dbReference>
<dbReference type="NCBIfam" id="TIGR01164">
    <property type="entry name" value="rplP_bact"/>
    <property type="match status" value="1"/>
</dbReference>
<dbReference type="PANTHER" id="PTHR12220">
    <property type="entry name" value="50S/60S RIBOSOMAL PROTEIN L16"/>
    <property type="match status" value="1"/>
</dbReference>
<dbReference type="PANTHER" id="PTHR12220:SF13">
    <property type="entry name" value="LARGE RIBOSOMAL SUBUNIT PROTEIN UL16M"/>
    <property type="match status" value="1"/>
</dbReference>
<dbReference type="Pfam" id="PF00252">
    <property type="entry name" value="Ribosomal_L16"/>
    <property type="match status" value="1"/>
</dbReference>
<dbReference type="PRINTS" id="PR00060">
    <property type="entry name" value="RIBOSOMALL16"/>
</dbReference>
<dbReference type="SUPFAM" id="SSF54686">
    <property type="entry name" value="Ribosomal protein L16p/L10e"/>
    <property type="match status" value="1"/>
</dbReference>
<dbReference type="PROSITE" id="PS00586">
    <property type="entry name" value="RIBOSOMAL_L16_1"/>
    <property type="match status" value="1"/>
</dbReference>
<dbReference type="PROSITE" id="PS00701">
    <property type="entry name" value="RIBOSOMAL_L16_2"/>
    <property type="match status" value="1"/>
</dbReference>
<accession>B1W400</accession>
<organism>
    <name type="scientific">Streptomyces griseus subsp. griseus (strain JCM 4626 / CBS 651.72 / NBRC 13350 / KCC S-0626 / ISP 5235)</name>
    <dbReference type="NCBI Taxonomy" id="455632"/>
    <lineage>
        <taxon>Bacteria</taxon>
        <taxon>Bacillati</taxon>
        <taxon>Actinomycetota</taxon>
        <taxon>Actinomycetes</taxon>
        <taxon>Kitasatosporales</taxon>
        <taxon>Streptomycetaceae</taxon>
        <taxon>Streptomyces</taxon>
    </lineage>
</organism>
<keyword id="KW-0687">Ribonucleoprotein</keyword>
<keyword id="KW-0689">Ribosomal protein</keyword>
<keyword id="KW-0694">RNA-binding</keyword>
<keyword id="KW-0699">rRNA-binding</keyword>
<keyword id="KW-0820">tRNA-binding</keyword>
<evidence type="ECO:0000255" key="1">
    <source>
        <dbReference type="HAMAP-Rule" id="MF_01342"/>
    </source>
</evidence>
<evidence type="ECO:0000256" key="2">
    <source>
        <dbReference type="SAM" id="MobiDB-lite"/>
    </source>
</evidence>
<evidence type="ECO:0000305" key="3"/>
<protein>
    <recommendedName>
        <fullName evidence="1">Large ribosomal subunit protein uL16</fullName>
    </recommendedName>
    <alternativeName>
        <fullName evidence="3">50S ribosomal protein L16</fullName>
    </alternativeName>
</protein>
<proteinExistence type="inferred from homology"/>
<reference key="1">
    <citation type="journal article" date="2008" name="J. Bacteriol.">
        <title>Genome sequence of the streptomycin-producing microorganism Streptomyces griseus IFO 13350.</title>
        <authorList>
            <person name="Ohnishi Y."/>
            <person name="Ishikawa J."/>
            <person name="Hara H."/>
            <person name="Suzuki H."/>
            <person name="Ikenoya M."/>
            <person name="Ikeda H."/>
            <person name="Yamashita A."/>
            <person name="Hattori M."/>
            <person name="Horinouchi S."/>
        </authorList>
    </citation>
    <scope>NUCLEOTIDE SEQUENCE [LARGE SCALE GENOMIC DNA]</scope>
    <source>
        <strain>JCM 4626 / CBS 651.72 / NBRC 13350 / KCC S-0626 / ISP 5235</strain>
    </source>
</reference>
<gene>
    <name evidence="1" type="primary">rplP</name>
    <name type="ordered locus">SGR_2827</name>
</gene>